<keyword id="KW-0963">Cytoplasm</keyword>
<keyword id="KW-0456">Lyase</keyword>
<keyword id="KW-0670">Pyruvate</keyword>
<keyword id="KW-1185">Reference proteome</keyword>
<keyword id="KW-0831">Ubiquinone biosynthesis</keyword>
<dbReference type="EC" id="4.1.3.40" evidence="1"/>
<dbReference type="EMBL" id="CP000447">
    <property type="protein sequence ID" value="ABI69911.1"/>
    <property type="molecule type" value="Genomic_DNA"/>
</dbReference>
<dbReference type="RefSeq" id="WP_011635540.1">
    <property type="nucleotide sequence ID" value="NC_008345.1"/>
</dbReference>
<dbReference type="SMR" id="Q08A04"/>
<dbReference type="STRING" id="318167.Sfri_0048"/>
<dbReference type="KEGG" id="sfr:Sfri_0048"/>
<dbReference type="eggNOG" id="COG3161">
    <property type="taxonomic scope" value="Bacteria"/>
</dbReference>
<dbReference type="HOGENOM" id="CLU_096824_1_1_6"/>
<dbReference type="OrthoDB" id="9789493at2"/>
<dbReference type="UniPathway" id="UPA00232"/>
<dbReference type="Proteomes" id="UP000000684">
    <property type="component" value="Chromosome"/>
</dbReference>
<dbReference type="GO" id="GO:0005829">
    <property type="term" value="C:cytosol"/>
    <property type="evidence" value="ECO:0007669"/>
    <property type="project" value="TreeGrafter"/>
</dbReference>
<dbReference type="GO" id="GO:0008813">
    <property type="term" value="F:chorismate lyase activity"/>
    <property type="evidence" value="ECO:0007669"/>
    <property type="project" value="UniProtKB-UniRule"/>
</dbReference>
<dbReference type="GO" id="GO:0042866">
    <property type="term" value="P:pyruvate biosynthetic process"/>
    <property type="evidence" value="ECO:0007669"/>
    <property type="project" value="UniProtKB-UniRule"/>
</dbReference>
<dbReference type="GO" id="GO:0006744">
    <property type="term" value="P:ubiquinone biosynthetic process"/>
    <property type="evidence" value="ECO:0007669"/>
    <property type="project" value="UniProtKB-UniRule"/>
</dbReference>
<dbReference type="Gene3D" id="3.40.1410.10">
    <property type="entry name" value="Chorismate lyase-like"/>
    <property type="match status" value="1"/>
</dbReference>
<dbReference type="HAMAP" id="MF_01632">
    <property type="entry name" value="UbiC"/>
    <property type="match status" value="1"/>
</dbReference>
<dbReference type="InterPro" id="IPR007440">
    <property type="entry name" value="Chorismate--pyruvate_lyase"/>
</dbReference>
<dbReference type="InterPro" id="IPR028978">
    <property type="entry name" value="Chorismate_lyase_/UTRA_dom_sf"/>
</dbReference>
<dbReference type="PANTHER" id="PTHR38683">
    <property type="entry name" value="CHORISMATE PYRUVATE-LYASE"/>
    <property type="match status" value="1"/>
</dbReference>
<dbReference type="PANTHER" id="PTHR38683:SF1">
    <property type="entry name" value="CHORISMATE PYRUVATE-LYASE"/>
    <property type="match status" value="1"/>
</dbReference>
<dbReference type="Pfam" id="PF04345">
    <property type="entry name" value="Chor_lyase"/>
    <property type="match status" value="1"/>
</dbReference>
<dbReference type="SUPFAM" id="SSF64288">
    <property type="entry name" value="Chorismate lyase-like"/>
    <property type="match status" value="1"/>
</dbReference>
<reference key="1">
    <citation type="submission" date="2006-08" db="EMBL/GenBank/DDBJ databases">
        <title>Complete sequence of Shewanella frigidimarina NCIMB 400.</title>
        <authorList>
            <consortium name="US DOE Joint Genome Institute"/>
            <person name="Copeland A."/>
            <person name="Lucas S."/>
            <person name="Lapidus A."/>
            <person name="Barry K."/>
            <person name="Detter J.C."/>
            <person name="Glavina del Rio T."/>
            <person name="Hammon N."/>
            <person name="Israni S."/>
            <person name="Dalin E."/>
            <person name="Tice H."/>
            <person name="Pitluck S."/>
            <person name="Fredrickson J.K."/>
            <person name="Kolker E."/>
            <person name="McCuel L.A."/>
            <person name="DiChristina T."/>
            <person name="Nealson K.H."/>
            <person name="Newman D."/>
            <person name="Tiedje J.M."/>
            <person name="Zhou J."/>
            <person name="Romine M.F."/>
            <person name="Culley D.E."/>
            <person name="Serres M."/>
            <person name="Chertkov O."/>
            <person name="Brettin T."/>
            <person name="Bruce D."/>
            <person name="Han C."/>
            <person name="Tapia R."/>
            <person name="Gilna P."/>
            <person name="Schmutz J."/>
            <person name="Larimer F."/>
            <person name="Land M."/>
            <person name="Hauser L."/>
            <person name="Kyrpides N."/>
            <person name="Mikhailova N."/>
            <person name="Richardson P."/>
        </authorList>
    </citation>
    <scope>NUCLEOTIDE SEQUENCE [LARGE SCALE GENOMIC DNA]</scope>
    <source>
        <strain>NCIMB 400</strain>
    </source>
</reference>
<proteinExistence type="inferred from homology"/>
<gene>
    <name evidence="1" type="primary">ubiC</name>
    <name type="ordered locus">Sfri_0048</name>
</gene>
<evidence type="ECO:0000255" key="1">
    <source>
        <dbReference type="HAMAP-Rule" id="MF_01632"/>
    </source>
</evidence>
<feature type="chain" id="PRO_0000292078" description="Probable chorismate pyruvate-lyase">
    <location>
        <begin position="1"/>
        <end position="204"/>
    </location>
</feature>
<feature type="binding site" evidence="1">
    <location>
        <position position="78"/>
    </location>
    <ligand>
        <name>substrate</name>
    </ligand>
</feature>
<feature type="binding site" evidence="1">
    <location>
        <position position="131"/>
    </location>
    <ligand>
        <name>substrate</name>
    </ligand>
</feature>
<feature type="binding site" evidence="1">
    <location>
        <position position="190"/>
    </location>
    <ligand>
        <name>substrate</name>
    </ligand>
</feature>
<name>UBIC_SHEFN</name>
<organism>
    <name type="scientific">Shewanella frigidimarina (strain NCIMB 400)</name>
    <dbReference type="NCBI Taxonomy" id="318167"/>
    <lineage>
        <taxon>Bacteria</taxon>
        <taxon>Pseudomonadati</taxon>
        <taxon>Pseudomonadota</taxon>
        <taxon>Gammaproteobacteria</taxon>
        <taxon>Alteromonadales</taxon>
        <taxon>Shewanellaceae</taxon>
        <taxon>Shewanella</taxon>
    </lineage>
</organism>
<protein>
    <recommendedName>
        <fullName evidence="1">Probable chorismate pyruvate-lyase</fullName>
        <shortName evidence="1">CL</shortName>
        <shortName evidence="1">CPL</shortName>
        <ecNumber evidence="1">4.1.3.40</ecNumber>
    </recommendedName>
</protein>
<comment type="function">
    <text evidence="1">Removes the pyruvyl group from chorismate, with concomitant aromatization of the ring, to provide 4-hydroxybenzoate (4HB) for the ubiquinone pathway.</text>
</comment>
<comment type="catalytic activity">
    <reaction evidence="1">
        <text>chorismate = 4-hydroxybenzoate + pyruvate</text>
        <dbReference type="Rhea" id="RHEA:16505"/>
        <dbReference type="ChEBI" id="CHEBI:15361"/>
        <dbReference type="ChEBI" id="CHEBI:17879"/>
        <dbReference type="ChEBI" id="CHEBI:29748"/>
        <dbReference type="EC" id="4.1.3.40"/>
    </reaction>
</comment>
<comment type="pathway">
    <text evidence="1">Cofactor biosynthesis; ubiquinone biosynthesis.</text>
</comment>
<comment type="subcellular location">
    <subcellularLocation>
        <location evidence="1">Cytoplasm</location>
    </subcellularLocation>
</comment>
<comment type="similarity">
    <text evidence="1">Belongs to the UbiC family.</text>
</comment>
<sequence length="204" mass="23100">MNVTSISFPYGESIHWFSPQKIDSLPHSQLKEWLLATGSLTQRLKTHCKHFEVKVLGEHLLEPLADEFPAQTNPVWIREVLLCLDGTPWVFARTLIPQTILGSQTPNYQNADDKQIREQQNDFTRLGTRPLGELLFSSPDITPGNIEVAQFETCGRLAALATSLNQQVNSSLWGRRRYFNLHGSQLIVSEIFLPAAVEYINQSI</sequence>
<accession>Q08A04</accession>